<proteinExistence type="inferred from homology"/>
<reference key="1">
    <citation type="journal article" date="2005" name="Genome Res.">
        <title>Comparative and functional genomic analyses of the pathogenicity of phytopathogen Xanthomonas campestris pv. campestris.</title>
        <authorList>
            <person name="Qian W."/>
            <person name="Jia Y."/>
            <person name="Ren S.-X."/>
            <person name="He Y.-Q."/>
            <person name="Feng J.-X."/>
            <person name="Lu L.-F."/>
            <person name="Sun Q."/>
            <person name="Ying G."/>
            <person name="Tang D.-J."/>
            <person name="Tang H."/>
            <person name="Wu W."/>
            <person name="Hao P."/>
            <person name="Wang L."/>
            <person name="Jiang B.-L."/>
            <person name="Zeng S."/>
            <person name="Gu W.-Y."/>
            <person name="Lu G."/>
            <person name="Rong L."/>
            <person name="Tian Y."/>
            <person name="Yao Z."/>
            <person name="Fu G."/>
            <person name="Chen B."/>
            <person name="Fang R."/>
            <person name="Qiang B."/>
            <person name="Chen Z."/>
            <person name="Zhao G.-P."/>
            <person name="Tang J.-L."/>
            <person name="He C."/>
        </authorList>
    </citation>
    <scope>NUCLEOTIDE SEQUENCE [LARGE SCALE GENOMIC DNA]</scope>
    <source>
        <strain>8004</strain>
    </source>
</reference>
<sequence length="102" mass="11575">MDAPKPWHLYLLLCRNGSYYAGITNDLERRFQAHLRGTGARYTRANPPLQVLASHPYPDRATASRAEWLLKQQPRARKLAWLQAQGLLPAESRPDDTPLTPA</sequence>
<accession>Q4UXR7</accession>
<comment type="similarity">
    <text evidence="2">Belongs to the UPF0213 family.</text>
</comment>
<protein>
    <recommendedName>
        <fullName>UPF0213 protein XC_1086</fullName>
    </recommendedName>
</protein>
<gene>
    <name type="ordered locus">XC_1086</name>
</gene>
<organism>
    <name type="scientific">Xanthomonas campestris pv. campestris (strain 8004)</name>
    <dbReference type="NCBI Taxonomy" id="314565"/>
    <lineage>
        <taxon>Bacteria</taxon>
        <taxon>Pseudomonadati</taxon>
        <taxon>Pseudomonadota</taxon>
        <taxon>Gammaproteobacteria</taxon>
        <taxon>Lysobacterales</taxon>
        <taxon>Lysobacteraceae</taxon>
        <taxon>Xanthomonas</taxon>
    </lineage>
</organism>
<dbReference type="EMBL" id="CP000050">
    <property type="protein sequence ID" value="AAY48156.1"/>
    <property type="molecule type" value="Genomic_DNA"/>
</dbReference>
<dbReference type="RefSeq" id="WP_011038187.1">
    <property type="nucleotide sequence ID" value="NZ_CP155948.1"/>
</dbReference>
<dbReference type="SMR" id="Q4UXR7"/>
<dbReference type="KEGG" id="xcb:XC_1086"/>
<dbReference type="HOGENOM" id="CLU_135650_0_2_6"/>
<dbReference type="Proteomes" id="UP000000420">
    <property type="component" value="Chromosome"/>
</dbReference>
<dbReference type="CDD" id="cd10456">
    <property type="entry name" value="GIY-YIG_UPF0213"/>
    <property type="match status" value="1"/>
</dbReference>
<dbReference type="Gene3D" id="3.40.1440.10">
    <property type="entry name" value="GIY-YIG endonuclease"/>
    <property type="match status" value="1"/>
</dbReference>
<dbReference type="InterPro" id="IPR000305">
    <property type="entry name" value="GIY-YIG_endonuc"/>
</dbReference>
<dbReference type="InterPro" id="IPR035901">
    <property type="entry name" value="GIY-YIG_endonuc_sf"/>
</dbReference>
<dbReference type="InterPro" id="IPR050190">
    <property type="entry name" value="UPF0213_domain"/>
</dbReference>
<dbReference type="PANTHER" id="PTHR34477">
    <property type="entry name" value="UPF0213 PROTEIN YHBQ"/>
    <property type="match status" value="1"/>
</dbReference>
<dbReference type="PANTHER" id="PTHR34477:SF1">
    <property type="entry name" value="UPF0213 PROTEIN YHBQ"/>
    <property type="match status" value="1"/>
</dbReference>
<dbReference type="Pfam" id="PF01541">
    <property type="entry name" value="GIY-YIG"/>
    <property type="match status" value="1"/>
</dbReference>
<dbReference type="SUPFAM" id="SSF82771">
    <property type="entry name" value="GIY-YIG endonuclease"/>
    <property type="match status" value="1"/>
</dbReference>
<dbReference type="PROSITE" id="PS50164">
    <property type="entry name" value="GIY_YIG"/>
    <property type="match status" value="1"/>
</dbReference>
<evidence type="ECO:0000255" key="1">
    <source>
        <dbReference type="PROSITE-ProRule" id="PRU00977"/>
    </source>
</evidence>
<evidence type="ECO:0000305" key="2"/>
<name>Y1086_XANC8</name>
<feature type="chain" id="PRO_1000063700" description="UPF0213 protein XC_1086">
    <location>
        <begin position="1"/>
        <end position="102"/>
    </location>
</feature>
<feature type="domain" description="GIY-YIG" evidence="1">
    <location>
        <begin position="5"/>
        <end position="80"/>
    </location>
</feature>